<proteinExistence type="inferred from homology"/>
<accession>Q9XBM3</accession>
<accession>F8ERZ8</accession>
<gene>
    <name type="primary">trpC</name>
    <name type="ordered locus">Zymop_0671</name>
</gene>
<evidence type="ECO:0000305" key="1"/>
<dbReference type="EC" id="4.1.1.48"/>
<dbReference type="EMBL" id="AF167440">
    <property type="protein sequence ID" value="AAD45395.1"/>
    <property type="molecule type" value="Genomic_DNA"/>
</dbReference>
<dbReference type="EMBL" id="CP002865">
    <property type="protein sequence ID" value="AEI37573.1"/>
    <property type="molecule type" value="Genomic_DNA"/>
</dbReference>
<dbReference type="RefSeq" id="WP_013933972.1">
    <property type="nucleotide sequence ID" value="NC_015709.1"/>
</dbReference>
<dbReference type="SMR" id="Q9XBM3"/>
<dbReference type="STRING" id="579138.Zymop_0671"/>
<dbReference type="KEGG" id="zmp:Zymop_0671"/>
<dbReference type="PATRIC" id="fig|579138.3.peg.706"/>
<dbReference type="eggNOG" id="COG0134">
    <property type="taxonomic scope" value="Bacteria"/>
</dbReference>
<dbReference type="HOGENOM" id="CLU_034247_2_0_5"/>
<dbReference type="UniPathway" id="UPA00035">
    <property type="reaction ID" value="UER00043"/>
</dbReference>
<dbReference type="Proteomes" id="UP000000491">
    <property type="component" value="Chromosome"/>
</dbReference>
<dbReference type="GO" id="GO:0004425">
    <property type="term" value="F:indole-3-glycerol-phosphate synthase activity"/>
    <property type="evidence" value="ECO:0007669"/>
    <property type="project" value="UniProtKB-UniRule"/>
</dbReference>
<dbReference type="GO" id="GO:0004640">
    <property type="term" value="F:phosphoribosylanthranilate isomerase activity"/>
    <property type="evidence" value="ECO:0007669"/>
    <property type="project" value="TreeGrafter"/>
</dbReference>
<dbReference type="GO" id="GO:0000162">
    <property type="term" value="P:L-tryptophan biosynthetic process"/>
    <property type="evidence" value="ECO:0007669"/>
    <property type="project" value="UniProtKB-UniRule"/>
</dbReference>
<dbReference type="CDD" id="cd00331">
    <property type="entry name" value="IGPS"/>
    <property type="match status" value="1"/>
</dbReference>
<dbReference type="FunFam" id="3.20.20.70:FF:000024">
    <property type="entry name" value="Indole-3-glycerol phosphate synthase"/>
    <property type="match status" value="1"/>
</dbReference>
<dbReference type="Gene3D" id="3.20.20.70">
    <property type="entry name" value="Aldolase class I"/>
    <property type="match status" value="1"/>
</dbReference>
<dbReference type="HAMAP" id="MF_00134_B">
    <property type="entry name" value="IGPS_B"/>
    <property type="match status" value="1"/>
</dbReference>
<dbReference type="InterPro" id="IPR013785">
    <property type="entry name" value="Aldolase_TIM"/>
</dbReference>
<dbReference type="InterPro" id="IPR045186">
    <property type="entry name" value="Indole-3-glycerol_P_synth"/>
</dbReference>
<dbReference type="InterPro" id="IPR013798">
    <property type="entry name" value="Indole-3-glycerol_P_synth_dom"/>
</dbReference>
<dbReference type="InterPro" id="IPR001468">
    <property type="entry name" value="Indole-3-GlycerolPSynthase_CS"/>
</dbReference>
<dbReference type="InterPro" id="IPR011060">
    <property type="entry name" value="RibuloseP-bd_barrel"/>
</dbReference>
<dbReference type="NCBIfam" id="NF001370">
    <property type="entry name" value="PRK00278.1-2"/>
    <property type="match status" value="1"/>
</dbReference>
<dbReference type="NCBIfam" id="NF001373">
    <property type="entry name" value="PRK00278.1-6"/>
    <property type="match status" value="1"/>
</dbReference>
<dbReference type="NCBIfam" id="NF001377">
    <property type="entry name" value="PRK00278.2-4"/>
    <property type="match status" value="1"/>
</dbReference>
<dbReference type="PANTHER" id="PTHR22854:SF2">
    <property type="entry name" value="INDOLE-3-GLYCEROL-PHOSPHATE SYNTHASE"/>
    <property type="match status" value="1"/>
</dbReference>
<dbReference type="PANTHER" id="PTHR22854">
    <property type="entry name" value="TRYPTOPHAN BIOSYNTHESIS PROTEIN"/>
    <property type="match status" value="1"/>
</dbReference>
<dbReference type="Pfam" id="PF00218">
    <property type="entry name" value="IGPS"/>
    <property type="match status" value="1"/>
</dbReference>
<dbReference type="SUPFAM" id="SSF51366">
    <property type="entry name" value="Ribulose-phoshate binding barrel"/>
    <property type="match status" value="1"/>
</dbReference>
<dbReference type="PROSITE" id="PS00614">
    <property type="entry name" value="IGPS"/>
    <property type="match status" value="1"/>
</dbReference>
<reference key="1">
    <citation type="submission" date="1999-07" db="EMBL/GenBank/DDBJ databases">
        <title>The trpC gene from Zymomonas mobilis encoding indole-3-glycerol phosphate synthase.</title>
        <authorList>
            <person name="Eddy C.K."/>
            <person name="Johnson G."/>
        </authorList>
    </citation>
    <scope>NUCLEOTIDE SEQUENCE [GENOMIC DNA]</scope>
    <source>
        <strain>ATCC 29192 / DSM 22645 / JCM 10191 / CCUG 17912 / NBRC 13757 / NCIMB 11200 / NRRL B-4491 / Barker I</strain>
    </source>
</reference>
<reference key="2">
    <citation type="journal article" date="2011" name="J. Bacteriol.">
        <title>Genome sequence of the ethanol-producing Zymomonas mobilis subsp. pomaceae lectotype strain ATCC 29192.</title>
        <authorList>
            <person name="Kouvelis V.N."/>
            <person name="Davenport K.W."/>
            <person name="Brettin T.S."/>
            <person name="Bruce D."/>
            <person name="Detter C."/>
            <person name="Han C.S."/>
            <person name="Nolan M."/>
            <person name="Tapia R."/>
            <person name="Damoulaki A."/>
            <person name="Kyrpides N.C."/>
            <person name="Typas M.A."/>
            <person name="Pappas K.M."/>
        </authorList>
    </citation>
    <scope>NUCLEOTIDE SEQUENCE [LARGE SCALE GENOMIC DNA]</scope>
    <source>
        <strain>ATCC 29192 / DSM 22645 / JCM 10191 / CCUG 17912 / NBRC 13757 / NCIMB 11200 / NRRL B-4491 / Barker I</strain>
    </source>
</reference>
<sequence>MSNILTEICATKARHVADKKKHISETDLYNLTKNQTAPRGFRAALDKKRAEGKFSLIAEIKKASPSKGLIRPDFEPILHARSYQEGGAACLSVLTDQPYFQGHEDYLIAARNEVTLPVLRKDFMIDPWQVTEARAIGADAILIIVAALEDNQMQEIEAAALEYGMDALIEVHSTQEMERALRLKSRLIGVNNRDLRDFSVSFDRTYELIKQAPKECTFVAESGIQTHDDLVAMNQHNIGCFLVGETLMRQKDVKQATRDLLGLN</sequence>
<organism>
    <name type="scientific">Zymomonas mobilis subsp. pomaceae (strain ATCC 29192 / DSM 22645 / JCM 10191 / CCUG 17912 / NBRC 13757 / NCIMB 11200 / NRRL B-4491 / Barker I)</name>
    <dbReference type="NCBI Taxonomy" id="579138"/>
    <lineage>
        <taxon>Bacteria</taxon>
        <taxon>Pseudomonadati</taxon>
        <taxon>Pseudomonadota</taxon>
        <taxon>Alphaproteobacteria</taxon>
        <taxon>Sphingomonadales</taxon>
        <taxon>Zymomonadaceae</taxon>
        <taxon>Zymomonas</taxon>
    </lineage>
</organism>
<feature type="chain" id="PRO_0000154288" description="Indole-3-glycerol phosphate synthase">
    <location>
        <begin position="1"/>
        <end position="264"/>
    </location>
</feature>
<feature type="sequence conflict" description="In Ref. 1; AAD45395." evidence="1" ref="1">
    <original>RH</original>
    <variation>EF</variation>
    <location>
        <begin position="14"/>
        <end position="15"/>
    </location>
</feature>
<feature type="sequence conflict" description="In Ref. 1; AAD45395." evidence="1" ref="1">
    <original>DK</original>
    <variation>ER</variation>
    <location>
        <begin position="18"/>
        <end position="19"/>
    </location>
</feature>
<feature type="sequence conflict" description="In Ref. 1; AAD45395." evidence="1" ref="1">
    <original>HISETDLYNLTKNQTA</original>
    <variation>QIGNNALLDLIKAQTQ</variation>
    <location>
        <begin position="22"/>
        <end position="37"/>
    </location>
</feature>
<feature type="sequence conflict" description="In Ref. 1; AAD45395." evidence="1" ref="1">
    <original>D</original>
    <variation>E</variation>
    <location>
        <position position="46"/>
    </location>
</feature>
<feature type="sequence conflict" description="In Ref. 1; AAD45395." evidence="1" ref="1">
    <original>EGKFS</original>
    <variation>RGQFG</variation>
    <location>
        <begin position="51"/>
        <end position="55"/>
    </location>
</feature>
<feature type="sequence conflict" description="In Ref. 1; AAD45395." evidence="1" ref="1">
    <original>P</original>
    <variation>S</variation>
    <location>
        <position position="72"/>
    </location>
</feature>
<feature type="sequence conflict" description="In Ref. 1; AAD45395." evidence="1" ref="1">
    <original>EPILHARSYQ</original>
    <variation>TPAAHAHDYE</variation>
    <location>
        <begin position="75"/>
        <end position="84"/>
    </location>
</feature>
<feature type="sequence conflict" description="In Ref. 1; AAD45395." evidence="1" ref="1">
    <original>Q</original>
    <variation>R</variation>
    <location>
        <position position="97"/>
    </location>
</feature>
<feature type="sequence conflict" description="In Ref. 1; AAD45395." evidence="1" ref="1">
    <original>NEVTLP</original>
    <variation>KAVKLPV</variation>
    <location>
        <begin position="112"/>
        <end position="117"/>
    </location>
</feature>
<feature type="sequence conflict" description="In Ref. 1; AAD45395." evidence="1" ref="1">
    <original>EDN</original>
    <variation>DDQ</variation>
    <location>
        <begin position="149"/>
        <end position="151"/>
    </location>
</feature>
<feature type="sequence conflict" description="In Ref. 1; AAD45395." evidence="1" ref="1">
    <original>E</original>
    <variation>D</variation>
    <location>
        <position position="155"/>
    </location>
</feature>
<feature type="sequence conflict" description="In Ref. 1; AAD45395." evidence="1" ref="1">
    <original>I</original>
    <variation>V</variation>
    <location>
        <position position="169"/>
    </location>
</feature>
<feature type="sequence conflict" description="In Ref. 1; AAD45395." evidence="1" ref="1">
    <original>TQ</original>
    <variation>HD</variation>
    <location>
        <begin position="174"/>
        <end position="175"/>
    </location>
</feature>
<feature type="sequence conflict" description="In Ref. 1; AAD45395." evidence="1" ref="1">
    <original>R</original>
    <variation>K</variation>
    <location>
        <position position="182"/>
    </location>
</feature>
<feature type="sequence conflict" description="In Ref. 1; AAD45395." evidence="1" ref="1">
    <original>IKQ</original>
    <variation>VGS</variation>
    <location>
        <begin position="209"/>
        <end position="211"/>
    </location>
</feature>
<feature type="sequence conflict" description="In Ref. 1; AAD45395." evidence="1" ref="1">
    <original>E</original>
    <variation>D</variation>
    <location>
        <position position="215"/>
    </location>
</feature>
<feature type="sequence conflict" description="In Ref. 1; AAD45395." evidence="1" ref="1">
    <original>QT</original>
    <variation>PN</variation>
    <location>
        <begin position="225"/>
        <end position="226"/>
    </location>
</feature>
<feature type="sequence conflict" description="In Ref. 1; AAD45395." evidence="1" ref="1">
    <original>NQHN</original>
    <variation>QRHD</variation>
    <location>
        <begin position="234"/>
        <end position="237"/>
    </location>
</feature>
<feature type="sequence conflict" description="In Ref. 1; AAD45395." evidence="1" ref="1">
    <original>KDVKQATR</original>
    <variation>DDLRKATK</variation>
    <location>
        <begin position="251"/>
        <end position="258"/>
    </location>
</feature>
<feature type="sequence conflict" description="In Ref. 1; AAD45395." evidence="1" ref="1">
    <original>N</original>
    <variation>S</variation>
    <location>
        <position position="264"/>
    </location>
</feature>
<protein>
    <recommendedName>
        <fullName>Indole-3-glycerol phosphate synthase</fullName>
        <shortName>IGPS</shortName>
        <ecNumber>4.1.1.48</ecNumber>
    </recommendedName>
</protein>
<comment type="catalytic activity">
    <reaction>
        <text>1-(2-carboxyphenylamino)-1-deoxy-D-ribulose 5-phosphate + H(+) = (1S,2R)-1-C-(indol-3-yl)glycerol 3-phosphate + CO2 + H2O</text>
        <dbReference type="Rhea" id="RHEA:23476"/>
        <dbReference type="ChEBI" id="CHEBI:15377"/>
        <dbReference type="ChEBI" id="CHEBI:15378"/>
        <dbReference type="ChEBI" id="CHEBI:16526"/>
        <dbReference type="ChEBI" id="CHEBI:58613"/>
        <dbReference type="ChEBI" id="CHEBI:58866"/>
        <dbReference type="EC" id="4.1.1.48"/>
    </reaction>
</comment>
<comment type="pathway">
    <text>Amino-acid biosynthesis; L-tryptophan biosynthesis; L-tryptophan from chorismate: step 4/5.</text>
</comment>
<comment type="similarity">
    <text evidence="1">Belongs to the TrpC family.</text>
</comment>
<keyword id="KW-0028">Amino-acid biosynthesis</keyword>
<keyword id="KW-0057">Aromatic amino acid biosynthesis</keyword>
<keyword id="KW-0210">Decarboxylase</keyword>
<keyword id="KW-0456">Lyase</keyword>
<keyword id="KW-0822">Tryptophan biosynthesis</keyword>
<name>TRPC_ZYMMT</name>